<name>LIP2_CANAL</name>
<protein>
    <recommendedName>
        <fullName evidence="6">Lipase 2</fullName>
        <ecNumber evidence="5">3.1.1.3</ecNumber>
    </recommendedName>
</protein>
<gene>
    <name evidence="6" type="primary">LIP2</name>
    <name type="ordered locus">CAALFM_C109420WA</name>
    <name type="ordered locus">orf19.12267</name>
</gene>
<sequence>MKGLVFLLGLLPTIYASLVHITPASEDDFYNPPAGFESAKNGDILKLRNSPNRLASFYFPIDVKNAWQLLVKSEDSFGNPNAFVTTLIEPYNADPSKVVSYQTWEDASNINCSPSYGAQFGSPLSTITTQIDMTLIVPPLRSGYYVVTPDYEGPKATFAVGRQSGQATLDSVRAILKSGSFSGINEDAKVALWGYSGGSLATGWAAALQPVYAPELQKNIVGAAVGGFAANITAIAESVDGTIFAGLITLALNGLANEYPDLKTAFYEELSDFAVPEFKAGAENCLAENIFHYPLHQYFTGPKRAFEKGWGLLKEDIFNKSIQDNLLIGLNKTYLPQVPVLIYHGTVDEIIPIKDPHAQYQLWCDWGIESLEFAEDLSTGHLAETFTGAPAALAWIDARFDGKTPIQGCSHTTRLTNLLYPNTSDSTHSYFLGIYQAVFGTPLGPGINGDNITINSGLLGLVSSII</sequence>
<comment type="function">
    <text evidence="3 4 5 8">Secreted lipase that is able to hydrolyze both the neutral triacylglycerols and the monopalmitate ester Tween 40, allowing the use of hydrolyzed products as carbon sources (PubMed:11131027). Has broad lipolytic activity, which may be important for colonization and subsequent infection, therefore contributing to the persistence and virulence in human tissue (Probable). My be important for alimentary tract colonization, but not oral infection (PubMed:15766791). Facilitates invasive disease via lipid-based suppression of the IL-17 response (PubMed:36323314). Inhibits IL-17 production indirectly by suppressing IL-23 production by tissue-resident dendritic cells (PubMed:36323314).</text>
</comment>
<comment type="catalytic activity">
    <reaction evidence="5">
        <text>a triacylglycerol + H2O = a diacylglycerol + a fatty acid + H(+)</text>
        <dbReference type="Rhea" id="RHEA:12044"/>
        <dbReference type="ChEBI" id="CHEBI:15377"/>
        <dbReference type="ChEBI" id="CHEBI:15378"/>
        <dbReference type="ChEBI" id="CHEBI:17855"/>
        <dbReference type="ChEBI" id="CHEBI:18035"/>
        <dbReference type="ChEBI" id="CHEBI:28868"/>
        <dbReference type="EC" id="3.1.1.3"/>
    </reaction>
    <physiologicalReaction direction="left-to-right" evidence="5">
        <dbReference type="Rhea" id="RHEA:12045"/>
    </physiologicalReaction>
</comment>
<comment type="subcellular location">
    <subcellularLocation>
        <location evidence="3 5">Secreted</location>
    </subcellularLocation>
</comment>
<comment type="induction">
    <text evidence="3 4">Expression is not induced in medium containing Tween 40 as the sole source of carbon (PubMed:11131027). Expression is up-regulated during the yeast-to-hyphal transition (PubMed:11131027). Expressed in alimentary tract but not oral tissue, during mouse oral infection (PubMed:15766791).</text>
</comment>
<comment type="disruption phenotype">
    <text evidence="5">Exhibits reduced host lethality and fails to persist in infected kidneys (PubMed:36323314). Impairs host immune evasion and leads to exaggerated IL-17 responses that lead to fungal clearance from solid organs and host survival (PubMed:36323314).</text>
</comment>
<comment type="similarity">
    <text evidence="7">Belongs to the AB hydrolase superfamily. Lipase family. Class Lip subfamily.</text>
</comment>
<accession>Q9P8W5</accession>
<accession>Q5APG1</accession>
<dbReference type="EC" id="3.1.1.3" evidence="5"/>
<dbReference type="EMBL" id="AF189152">
    <property type="protein sequence ID" value="AAF34253.1"/>
    <property type="molecule type" value="Genomic_DNA"/>
</dbReference>
<dbReference type="EMBL" id="CP017623">
    <property type="protein sequence ID" value="AOW26575.1"/>
    <property type="molecule type" value="Genomic_DNA"/>
</dbReference>
<dbReference type="RefSeq" id="XP_723490.1">
    <property type="nucleotide sequence ID" value="XM_718397.1"/>
</dbReference>
<dbReference type="SMR" id="Q9P8W5"/>
<dbReference type="STRING" id="237561.Q9P8W5"/>
<dbReference type="ESTHER" id="canal-LIP2">
    <property type="family name" value="Fungal-Bact_LIP"/>
</dbReference>
<dbReference type="GlyCosmos" id="Q9P8W5">
    <property type="glycosylation" value="5 sites, No reported glycans"/>
</dbReference>
<dbReference type="EnsemblFungi" id="C1_09420W_A-T">
    <property type="protein sequence ID" value="C1_09420W_A-T-p1"/>
    <property type="gene ID" value="C1_09420W_A"/>
</dbReference>
<dbReference type="GeneID" id="3634854"/>
<dbReference type="KEGG" id="cal:CAALFM_C109420WA"/>
<dbReference type="CGD" id="CAL0000197688">
    <property type="gene designation" value="LIP2"/>
</dbReference>
<dbReference type="VEuPathDB" id="FungiDB:C1_09420W_A"/>
<dbReference type="VEuPathDB" id="FungiDB:CAWG_00487"/>
<dbReference type="eggNOG" id="ENOG502S2P7">
    <property type="taxonomic scope" value="Eukaryota"/>
</dbReference>
<dbReference type="HOGENOM" id="CLU_029538_5_0_1"/>
<dbReference type="InParanoid" id="Q5APG1"/>
<dbReference type="OMA" id="WITGSAN"/>
<dbReference type="OrthoDB" id="2373480at2759"/>
<dbReference type="Proteomes" id="UP000000559">
    <property type="component" value="Chromosome 1"/>
</dbReference>
<dbReference type="GO" id="GO:0005576">
    <property type="term" value="C:extracellular region"/>
    <property type="evidence" value="ECO:0007669"/>
    <property type="project" value="UniProtKB-SubCell"/>
</dbReference>
<dbReference type="GO" id="GO:0004806">
    <property type="term" value="F:triacylglycerol lipase activity"/>
    <property type="evidence" value="ECO:0007669"/>
    <property type="project" value="UniProtKB-EC"/>
</dbReference>
<dbReference type="GO" id="GO:0016042">
    <property type="term" value="P:lipid catabolic process"/>
    <property type="evidence" value="ECO:0007669"/>
    <property type="project" value="UniProtKB-KW"/>
</dbReference>
<dbReference type="FunFam" id="1.10.260.130:FF:000001">
    <property type="entry name" value="Lipase 2"/>
    <property type="match status" value="1"/>
</dbReference>
<dbReference type="Gene3D" id="1.10.260.130">
    <property type="match status" value="1"/>
</dbReference>
<dbReference type="Gene3D" id="3.40.50.1820">
    <property type="entry name" value="alpha/beta hydrolase"/>
    <property type="match status" value="1"/>
</dbReference>
<dbReference type="InterPro" id="IPR029058">
    <property type="entry name" value="AB_hydrolase_fold"/>
</dbReference>
<dbReference type="InterPro" id="IPR005152">
    <property type="entry name" value="Lipase_secreted"/>
</dbReference>
<dbReference type="PANTHER" id="PTHR34853">
    <property type="match status" value="1"/>
</dbReference>
<dbReference type="PANTHER" id="PTHR34853:SF1">
    <property type="entry name" value="LIPASE 5"/>
    <property type="match status" value="1"/>
</dbReference>
<dbReference type="Pfam" id="PF03583">
    <property type="entry name" value="LIP"/>
    <property type="match status" value="1"/>
</dbReference>
<dbReference type="SUPFAM" id="SSF53474">
    <property type="entry name" value="alpha/beta-Hydrolases"/>
    <property type="match status" value="1"/>
</dbReference>
<organism>
    <name type="scientific">Candida albicans (strain SC5314 / ATCC MYA-2876)</name>
    <name type="common">Yeast</name>
    <dbReference type="NCBI Taxonomy" id="237561"/>
    <lineage>
        <taxon>Eukaryota</taxon>
        <taxon>Fungi</taxon>
        <taxon>Dikarya</taxon>
        <taxon>Ascomycota</taxon>
        <taxon>Saccharomycotina</taxon>
        <taxon>Pichiomycetes</taxon>
        <taxon>Debaryomycetaceae</taxon>
        <taxon>Candida/Lodderomyces clade</taxon>
        <taxon>Candida</taxon>
    </lineage>
</organism>
<proteinExistence type="evidence at protein level"/>
<reference key="1">
    <citation type="journal article" date="2000" name="Arch. Microbiol.">
        <title>Secreted lipases of Candida albicans: cloning, characterisation and expression analysis of a new gene family with at least ten members.</title>
        <authorList>
            <person name="Hube B."/>
            <person name="Stehr F."/>
            <person name="Bossenz M."/>
            <person name="Mazur A."/>
            <person name="Kretschmar M."/>
            <person name="Schaefer W."/>
        </authorList>
    </citation>
    <scope>NUCLEOTIDE SEQUENCE [GENOMIC DNA]</scope>
    <scope>SUBCELLULAR LOCATION</scope>
    <scope>FUNCTION</scope>
    <scope>INDUCTION</scope>
    <source>
        <strain>1161</strain>
    </source>
</reference>
<reference key="2">
    <citation type="journal article" date="2004" name="Proc. Natl. Acad. Sci. U.S.A.">
        <title>The diploid genome sequence of Candida albicans.</title>
        <authorList>
            <person name="Jones T."/>
            <person name="Federspiel N.A."/>
            <person name="Chibana H."/>
            <person name="Dungan J."/>
            <person name="Kalman S."/>
            <person name="Magee B.B."/>
            <person name="Newport G."/>
            <person name="Thorstenson Y.R."/>
            <person name="Agabian N."/>
            <person name="Magee P.T."/>
            <person name="Davis R.W."/>
            <person name="Scherer S."/>
        </authorList>
    </citation>
    <scope>NUCLEOTIDE SEQUENCE [LARGE SCALE GENOMIC DNA]</scope>
    <source>
        <strain>SC5314 / ATCC MYA-2876</strain>
    </source>
</reference>
<reference key="3">
    <citation type="journal article" date="2007" name="Genome Biol.">
        <title>Assembly of the Candida albicans genome into sixteen supercontigs aligned on the eight chromosomes.</title>
        <authorList>
            <person name="van het Hoog M."/>
            <person name="Rast T.J."/>
            <person name="Martchenko M."/>
            <person name="Grindle S."/>
            <person name="Dignard D."/>
            <person name="Hogues H."/>
            <person name="Cuomo C."/>
            <person name="Berriman M."/>
            <person name="Scherer S."/>
            <person name="Magee B.B."/>
            <person name="Whiteway M."/>
            <person name="Chibana H."/>
            <person name="Nantel A."/>
            <person name="Magee P.T."/>
        </authorList>
    </citation>
    <scope>GENOME REANNOTATION</scope>
    <source>
        <strain>SC5314 / ATCC MYA-2876</strain>
    </source>
</reference>
<reference key="4">
    <citation type="journal article" date="2013" name="Genome Biol.">
        <title>Assembly of a phased diploid Candida albicans genome facilitates allele-specific measurements and provides a simple model for repeat and indel structure.</title>
        <authorList>
            <person name="Muzzey D."/>
            <person name="Schwartz K."/>
            <person name="Weissman J.S."/>
            <person name="Sherlock G."/>
        </authorList>
    </citation>
    <scope>NUCLEOTIDE SEQUENCE [LARGE SCALE GENOMIC DNA]</scope>
    <scope>GENOME REANNOTATION</scope>
    <source>
        <strain>SC5314 / ATCC MYA-2876</strain>
    </source>
</reference>
<reference key="5">
    <citation type="journal article" date="2004" name="FEMS Yeast Res.">
        <title>Expression analysis of the Candida albicans lipase gene family during experimental infections and in patient samples.</title>
        <authorList>
            <person name="Stehr F."/>
            <person name="Felk A."/>
            <person name="Gacser A."/>
            <person name="Kretschmar M."/>
            <person name="Maehnss B."/>
            <person name="Neuber K."/>
            <person name="Hube B."/>
            <person name="Schaefer W."/>
        </authorList>
    </citation>
    <scope>INDUCTION</scope>
</reference>
<reference key="6">
    <citation type="journal article" date="2005" name="FEMS Microbiol. Lett.">
        <title>Differential Candida albicans lipase gene expression during alimentary tract colonization and infection.</title>
        <authorList>
            <person name="Schofield D.A."/>
            <person name="Westwater C."/>
            <person name="Warner T."/>
            <person name="Balish E."/>
        </authorList>
    </citation>
    <scope>FUNCTION</scope>
    <scope>INDUCTION</scope>
</reference>
<reference key="7">
    <citation type="journal article" date="2022" name="Cell Host Microbe">
        <title>Deep tissue infection by an invasive human fungal pathogen requires lipid-based suppression of the IL-17 response.</title>
        <authorList>
            <person name="Basso P."/>
            <person name="Dang E.V."/>
            <person name="Urisman A."/>
            <person name="Cowen L.E."/>
            <person name="Madhani H.D."/>
            <person name="Noble S.M."/>
        </authorList>
    </citation>
    <scope>FUNCTION</scope>
    <scope>CATALYTIC ACTIVITY</scope>
    <scope>DISRUPTION PHENOTYPE</scope>
    <scope>MUTAGENESIS OF SER-196; ASP-240 AND HIS-344</scope>
    <scope>SUBCELLULAR LOCATION</scope>
</reference>
<evidence type="ECO:0000250" key="1">
    <source>
        <dbReference type="UniProtKB" id="W3VKA4"/>
    </source>
</evidence>
<evidence type="ECO:0000255" key="2"/>
<evidence type="ECO:0000269" key="3">
    <source>
    </source>
</evidence>
<evidence type="ECO:0000269" key="4">
    <source>
    </source>
</evidence>
<evidence type="ECO:0000269" key="5">
    <source>
    </source>
</evidence>
<evidence type="ECO:0000303" key="6">
    <source>
    </source>
</evidence>
<evidence type="ECO:0000305" key="7"/>
<evidence type="ECO:0000305" key="8">
    <source>
    </source>
</evidence>
<keyword id="KW-1015">Disulfide bond</keyword>
<keyword id="KW-0325">Glycoprotein</keyword>
<keyword id="KW-0378">Hydrolase</keyword>
<keyword id="KW-0442">Lipid degradation</keyword>
<keyword id="KW-0443">Lipid metabolism</keyword>
<keyword id="KW-1185">Reference proteome</keyword>
<keyword id="KW-0964">Secreted</keyword>
<keyword id="KW-0732">Signal</keyword>
<keyword id="KW-0843">Virulence</keyword>
<feature type="signal peptide" evidence="2">
    <location>
        <begin position="1"/>
        <end position="16"/>
    </location>
</feature>
<feature type="chain" id="PRO_0000017821" description="Lipase 2">
    <location>
        <begin position="17"/>
        <end position="466"/>
    </location>
</feature>
<feature type="active site" description="Charge relay system" evidence="1">
    <location>
        <position position="196"/>
    </location>
</feature>
<feature type="active site" description="Charge relay system" evidence="1">
    <location>
        <position position="348"/>
    </location>
</feature>
<feature type="active site" description="Charge relay system" evidence="1">
    <location>
        <position position="381"/>
    </location>
</feature>
<feature type="glycosylation site" description="N-linked (GlcNAc...) asparagine" evidence="2">
    <location>
        <position position="231"/>
    </location>
</feature>
<feature type="glycosylation site" description="N-linked (GlcNAc...) asparagine" evidence="2">
    <location>
        <position position="319"/>
    </location>
</feature>
<feature type="glycosylation site" description="N-linked (GlcNAc...) asparagine" evidence="2">
    <location>
        <position position="331"/>
    </location>
</feature>
<feature type="glycosylation site" description="N-linked (GlcNAc...) asparagine" evidence="2">
    <location>
        <position position="422"/>
    </location>
</feature>
<feature type="glycosylation site" description="N-linked (GlcNAc...) asparagine" evidence="2">
    <location>
        <position position="451"/>
    </location>
</feature>
<feature type="disulfide bond" evidence="1">
    <location>
        <begin position="112"/>
        <end position="285"/>
    </location>
</feature>
<feature type="disulfide bond" evidence="1">
    <location>
        <begin position="364"/>
        <end position="409"/>
    </location>
</feature>
<feature type="mutagenesis site" description="Leads to significantly reduced lipase activity and impairs the suppression of IL-23 production by tissue-resident dendritic cells." evidence="5">
    <original>S</original>
    <variation>A</variation>
    <location>
        <position position="196"/>
    </location>
</feature>
<feature type="mutagenesis site" description="Leads to significantly reduced lipase activity and impairs the suppression of IL-23 production by tissue-resident dendritic cells." evidence="5">
    <original>D</original>
    <variation>A</variation>
    <location>
        <position position="240"/>
    </location>
</feature>
<feature type="mutagenesis site" description="Leads to significantly reduced lipase activity and impairs the suppression of IL-23 production by tissue-resident dendritic cells." evidence="5">
    <original>H</original>
    <variation>A</variation>
    <location>
        <position position="344"/>
    </location>
</feature>
<feature type="sequence conflict" description="In Ref. 1; AAF34253." evidence="7" ref="1">
    <original>A</original>
    <variation>S</variation>
    <location>
        <position position="245"/>
    </location>
</feature>